<comment type="function">
    <text evidence="1">Can catalyze the hydrolysis of ATP in the presence of single-stranded DNA, the ATP-dependent uptake of single-stranded DNA by duplex DNA, and the ATP-dependent hybridization of homologous single-stranded DNAs. It interacts with LexA causing its activation and leading to its autocatalytic cleavage.</text>
</comment>
<comment type="subcellular location">
    <subcellularLocation>
        <location evidence="1">Cytoplasm</location>
    </subcellularLocation>
</comment>
<comment type="similarity">
    <text evidence="1">Belongs to the RecA family.</text>
</comment>
<name>RECA_THISH</name>
<reference key="1">
    <citation type="journal article" date="2011" name="Stand. Genomic Sci.">
        <title>Complete genome sequence of 'Thioalkalivibrio sulfidophilus' HL-EbGr7.</title>
        <authorList>
            <person name="Muyzer G."/>
            <person name="Sorokin D.Y."/>
            <person name="Mavromatis K."/>
            <person name="Lapidus A."/>
            <person name="Clum A."/>
            <person name="Ivanova N."/>
            <person name="Pati A."/>
            <person name="d'Haeseleer P."/>
            <person name="Woyke T."/>
            <person name="Kyrpides N.C."/>
        </authorList>
    </citation>
    <scope>NUCLEOTIDE SEQUENCE [LARGE SCALE GENOMIC DNA]</scope>
    <source>
        <strain>HL-EbGR7</strain>
    </source>
</reference>
<proteinExistence type="inferred from homology"/>
<evidence type="ECO:0000255" key="1">
    <source>
        <dbReference type="HAMAP-Rule" id="MF_00268"/>
    </source>
</evidence>
<evidence type="ECO:0000256" key="2">
    <source>
        <dbReference type="SAM" id="MobiDB-lite"/>
    </source>
</evidence>
<accession>B8GQV3</accession>
<feature type="chain" id="PRO_1000193337" description="Protein RecA">
    <location>
        <begin position="1"/>
        <end position="343"/>
    </location>
</feature>
<feature type="region of interest" description="Disordered" evidence="2">
    <location>
        <begin position="319"/>
        <end position="343"/>
    </location>
</feature>
<feature type="binding site" evidence="1">
    <location>
        <begin position="66"/>
        <end position="73"/>
    </location>
    <ligand>
        <name>ATP</name>
        <dbReference type="ChEBI" id="CHEBI:30616"/>
    </ligand>
</feature>
<organism>
    <name type="scientific">Thioalkalivibrio sulfidiphilus (strain HL-EbGR7)</name>
    <dbReference type="NCBI Taxonomy" id="396588"/>
    <lineage>
        <taxon>Bacteria</taxon>
        <taxon>Pseudomonadati</taxon>
        <taxon>Pseudomonadota</taxon>
        <taxon>Gammaproteobacteria</taxon>
        <taxon>Chromatiales</taxon>
        <taxon>Ectothiorhodospiraceae</taxon>
        <taxon>Thioalkalivibrio</taxon>
    </lineage>
</organism>
<protein>
    <recommendedName>
        <fullName evidence="1">Protein RecA</fullName>
    </recommendedName>
    <alternativeName>
        <fullName evidence="1">Recombinase A</fullName>
    </alternativeName>
</protein>
<sequence>MDENRKKALSAALGQIERQFGKGAVMRMGDSTAVRDVEAISTGSLALDIALGIGGLPKGRVVEIYGPESSGKTTLTLQVIAECQKQGGTAAFVDAEHALDPGYAEKLGVNVDDLLVSQPDTGEQALEIADMLVRSGAVDVVVVDSVAALTPKAEIEGEMGDAHVGLQARLMSQALRKLTANIKRSNTLVIFINQIRMKIGVMFGNPETTTGGNALKFYASVRLDIRRTGAIKKGDEVIGNETRVKVVKNKVAPPFKQAEFEILYGEGISRLGEVIDIGVQDGIVDKSGAWYSYNGERIGQGKDNARTFLKEHPEMAGEIERQIREKHLPKRSAKADEAESAEA</sequence>
<gene>
    <name evidence="1" type="primary">recA</name>
    <name type="ordered locus">Tgr7_1287</name>
</gene>
<keyword id="KW-0067">ATP-binding</keyword>
<keyword id="KW-0963">Cytoplasm</keyword>
<keyword id="KW-0227">DNA damage</keyword>
<keyword id="KW-0233">DNA recombination</keyword>
<keyword id="KW-0234">DNA repair</keyword>
<keyword id="KW-0238">DNA-binding</keyword>
<keyword id="KW-0547">Nucleotide-binding</keyword>
<keyword id="KW-1185">Reference proteome</keyword>
<keyword id="KW-0742">SOS response</keyword>
<dbReference type="EMBL" id="CP001339">
    <property type="protein sequence ID" value="ACL72373.1"/>
    <property type="molecule type" value="Genomic_DNA"/>
</dbReference>
<dbReference type="RefSeq" id="WP_012637856.1">
    <property type="nucleotide sequence ID" value="NC_011901.1"/>
</dbReference>
<dbReference type="SMR" id="B8GQV3"/>
<dbReference type="STRING" id="396588.Tgr7_1287"/>
<dbReference type="KEGG" id="tgr:Tgr7_1287"/>
<dbReference type="eggNOG" id="COG0468">
    <property type="taxonomic scope" value="Bacteria"/>
</dbReference>
<dbReference type="HOGENOM" id="CLU_040469_3_2_6"/>
<dbReference type="OrthoDB" id="9776733at2"/>
<dbReference type="Proteomes" id="UP000002383">
    <property type="component" value="Chromosome"/>
</dbReference>
<dbReference type="GO" id="GO:0005829">
    <property type="term" value="C:cytosol"/>
    <property type="evidence" value="ECO:0007669"/>
    <property type="project" value="TreeGrafter"/>
</dbReference>
<dbReference type="GO" id="GO:0005524">
    <property type="term" value="F:ATP binding"/>
    <property type="evidence" value="ECO:0007669"/>
    <property type="project" value="UniProtKB-UniRule"/>
</dbReference>
<dbReference type="GO" id="GO:0016887">
    <property type="term" value="F:ATP hydrolysis activity"/>
    <property type="evidence" value="ECO:0007669"/>
    <property type="project" value="InterPro"/>
</dbReference>
<dbReference type="GO" id="GO:0140664">
    <property type="term" value="F:ATP-dependent DNA damage sensor activity"/>
    <property type="evidence" value="ECO:0007669"/>
    <property type="project" value="InterPro"/>
</dbReference>
<dbReference type="GO" id="GO:0003684">
    <property type="term" value="F:damaged DNA binding"/>
    <property type="evidence" value="ECO:0007669"/>
    <property type="project" value="UniProtKB-UniRule"/>
</dbReference>
<dbReference type="GO" id="GO:0003697">
    <property type="term" value="F:single-stranded DNA binding"/>
    <property type="evidence" value="ECO:0007669"/>
    <property type="project" value="UniProtKB-UniRule"/>
</dbReference>
<dbReference type="GO" id="GO:0006310">
    <property type="term" value="P:DNA recombination"/>
    <property type="evidence" value="ECO:0007669"/>
    <property type="project" value="UniProtKB-UniRule"/>
</dbReference>
<dbReference type="GO" id="GO:0006281">
    <property type="term" value="P:DNA repair"/>
    <property type="evidence" value="ECO:0007669"/>
    <property type="project" value="UniProtKB-UniRule"/>
</dbReference>
<dbReference type="GO" id="GO:0009432">
    <property type="term" value="P:SOS response"/>
    <property type="evidence" value="ECO:0007669"/>
    <property type="project" value="UniProtKB-UniRule"/>
</dbReference>
<dbReference type="CDD" id="cd00983">
    <property type="entry name" value="RecA"/>
    <property type="match status" value="1"/>
</dbReference>
<dbReference type="FunFam" id="3.40.50.300:FF:000087">
    <property type="entry name" value="Recombinase RecA"/>
    <property type="match status" value="1"/>
</dbReference>
<dbReference type="Gene3D" id="3.40.50.300">
    <property type="entry name" value="P-loop containing nucleotide triphosphate hydrolases"/>
    <property type="match status" value="1"/>
</dbReference>
<dbReference type="HAMAP" id="MF_00268">
    <property type="entry name" value="RecA"/>
    <property type="match status" value="1"/>
</dbReference>
<dbReference type="InterPro" id="IPR003593">
    <property type="entry name" value="AAA+_ATPase"/>
</dbReference>
<dbReference type="InterPro" id="IPR013765">
    <property type="entry name" value="DNA_recomb/repair_RecA"/>
</dbReference>
<dbReference type="InterPro" id="IPR020584">
    <property type="entry name" value="DNA_recomb/repair_RecA_CS"/>
</dbReference>
<dbReference type="InterPro" id="IPR027417">
    <property type="entry name" value="P-loop_NTPase"/>
</dbReference>
<dbReference type="InterPro" id="IPR049261">
    <property type="entry name" value="RecA-like_C"/>
</dbReference>
<dbReference type="InterPro" id="IPR049428">
    <property type="entry name" value="RecA-like_N"/>
</dbReference>
<dbReference type="InterPro" id="IPR020588">
    <property type="entry name" value="RecA_ATP-bd"/>
</dbReference>
<dbReference type="InterPro" id="IPR023400">
    <property type="entry name" value="RecA_C_sf"/>
</dbReference>
<dbReference type="InterPro" id="IPR020587">
    <property type="entry name" value="RecA_monomer-monomer_interface"/>
</dbReference>
<dbReference type="NCBIfam" id="TIGR02012">
    <property type="entry name" value="tigrfam_recA"/>
    <property type="match status" value="1"/>
</dbReference>
<dbReference type="PANTHER" id="PTHR45900:SF1">
    <property type="entry name" value="MITOCHONDRIAL DNA REPAIR PROTEIN RECA HOMOLOG-RELATED"/>
    <property type="match status" value="1"/>
</dbReference>
<dbReference type="PANTHER" id="PTHR45900">
    <property type="entry name" value="RECA"/>
    <property type="match status" value="1"/>
</dbReference>
<dbReference type="Pfam" id="PF00154">
    <property type="entry name" value="RecA"/>
    <property type="match status" value="1"/>
</dbReference>
<dbReference type="Pfam" id="PF21096">
    <property type="entry name" value="RecA_C"/>
    <property type="match status" value="1"/>
</dbReference>
<dbReference type="PRINTS" id="PR00142">
    <property type="entry name" value="RECA"/>
</dbReference>
<dbReference type="SMART" id="SM00382">
    <property type="entry name" value="AAA"/>
    <property type="match status" value="1"/>
</dbReference>
<dbReference type="SUPFAM" id="SSF52540">
    <property type="entry name" value="P-loop containing nucleoside triphosphate hydrolases"/>
    <property type="match status" value="1"/>
</dbReference>
<dbReference type="SUPFAM" id="SSF54752">
    <property type="entry name" value="RecA protein, C-terminal domain"/>
    <property type="match status" value="1"/>
</dbReference>
<dbReference type="PROSITE" id="PS00321">
    <property type="entry name" value="RECA_1"/>
    <property type="match status" value="1"/>
</dbReference>
<dbReference type="PROSITE" id="PS50162">
    <property type="entry name" value="RECA_2"/>
    <property type="match status" value="1"/>
</dbReference>
<dbReference type="PROSITE" id="PS50163">
    <property type="entry name" value="RECA_3"/>
    <property type="match status" value="1"/>
</dbReference>